<sequence length="167" mass="18940">MVKILVLALVFSLAHAQDFAELQGKWYTIVIAADNLEKIEEGGPLRFYFRHIDCYKNCSEMEITFYVITNNQCSKTTVIGYLKGNGTYQTQFEGNNIFQPLYITSDKIFFTNKNMDRAGQETNMIVVAGKGNALTPEENEILVQFAHEKKIPVENILNILATDTCPE</sequence>
<evidence type="ECO:0000250" key="1"/>
<evidence type="ECO:0000250" key="2">
    <source>
        <dbReference type="UniProtKB" id="P09465"/>
    </source>
</evidence>
<evidence type="ECO:0000255" key="3"/>
<evidence type="ECO:0000305" key="4"/>
<dbReference type="EMBL" id="AJ225170">
    <property type="protein sequence ID" value="CAA12414.1"/>
    <property type="molecule type" value="Genomic_DNA"/>
</dbReference>
<dbReference type="RefSeq" id="XP_040599757.1">
    <property type="nucleotide sequence ID" value="XM_040743823.1"/>
</dbReference>
<dbReference type="SMR" id="Q9Z1I7"/>
<dbReference type="GeneID" id="121139823"/>
<dbReference type="OrthoDB" id="9630146at2759"/>
<dbReference type="Proteomes" id="UP000189706">
    <property type="component" value="Unplaced"/>
</dbReference>
<dbReference type="GO" id="GO:0005615">
    <property type="term" value="C:extracellular space"/>
    <property type="evidence" value="ECO:0000314"/>
    <property type="project" value="UniProtKB"/>
</dbReference>
<dbReference type="GO" id="GO:0005549">
    <property type="term" value="F:odorant binding"/>
    <property type="evidence" value="ECO:0007669"/>
    <property type="project" value="TreeGrafter"/>
</dbReference>
<dbReference type="GO" id="GO:0036094">
    <property type="term" value="F:small molecule binding"/>
    <property type="evidence" value="ECO:0007669"/>
    <property type="project" value="InterPro"/>
</dbReference>
<dbReference type="CDD" id="cd19427">
    <property type="entry name" value="lipocalin_OBP-like"/>
    <property type="match status" value="1"/>
</dbReference>
<dbReference type="FunFam" id="2.40.128.20:FF:000008">
    <property type="entry name" value="Major urinary protein"/>
    <property type="match status" value="1"/>
</dbReference>
<dbReference type="Gene3D" id="2.40.128.20">
    <property type="match status" value="1"/>
</dbReference>
<dbReference type="InterPro" id="IPR012674">
    <property type="entry name" value="Calycin"/>
</dbReference>
<dbReference type="InterPro" id="IPR002345">
    <property type="entry name" value="Lipocalin"/>
</dbReference>
<dbReference type="InterPro" id="IPR022272">
    <property type="entry name" value="Lipocalin_CS"/>
</dbReference>
<dbReference type="InterPro" id="IPR000566">
    <property type="entry name" value="Lipocln_cytosolic_FA-bd_dom"/>
</dbReference>
<dbReference type="InterPro" id="IPR002448">
    <property type="entry name" value="OBP-like"/>
</dbReference>
<dbReference type="PANTHER" id="PTHR11430">
    <property type="entry name" value="LIPOCALIN"/>
    <property type="match status" value="1"/>
</dbReference>
<dbReference type="PANTHER" id="PTHR11430:SF65">
    <property type="entry name" value="ODORANT-BINDING PROTEIN 1A-RELATED"/>
    <property type="match status" value="1"/>
</dbReference>
<dbReference type="Pfam" id="PF00061">
    <property type="entry name" value="Lipocalin"/>
    <property type="match status" value="1"/>
</dbReference>
<dbReference type="PRINTS" id="PR01173">
    <property type="entry name" value="ODORANTBNDNG"/>
</dbReference>
<dbReference type="SUPFAM" id="SSF50814">
    <property type="entry name" value="Lipocalins"/>
    <property type="match status" value="1"/>
</dbReference>
<dbReference type="PROSITE" id="PS00213">
    <property type="entry name" value="LIPOCALIN"/>
    <property type="match status" value="1"/>
</dbReference>
<organism>
    <name type="scientific">Mesocricetus auratus</name>
    <name type="common">Golden hamster</name>
    <dbReference type="NCBI Taxonomy" id="10036"/>
    <lineage>
        <taxon>Eukaryota</taxon>
        <taxon>Metazoa</taxon>
        <taxon>Chordata</taxon>
        <taxon>Craniata</taxon>
        <taxon>Vertebrata</taxon>
        <taxon>Euteleostomi</taxon>
        <taxon>Mammalia</taxon>
        <taxon>Eutheria</taxon>
        <taxon>Euarchontoglires</taxon>
        <taxon>Glires</taxon>
        <taxon>Rodentia</taxon>
        <taxon>Myomorpha</taxon>
        <taxon>Muroidea</taxon>
        <taxon>Cricetidae</taxon>
        <taxon>Cricetinae</taxon>
        <taxon>Mesocricetus</taxon>
    </lineage>
</organism>
<feature type="signal peptide" evidence="1">
    <location>
        <begin position="1"/>
        <end position="16"/>
    </location>
</feature>
<feature type="chain" id="PRO_0000017879" description="Aphrodisin">
    <location>
        <begin position="17"/>
        <end position="167"/>
    </location>
</feature>
<feature type="modified residue" description="Pyrrolidone carboxylic acid" evidence="2">
    <location>
        <position position="17"/>
    </location>
</feature>
<feature type="glycosylation site" description="N-linked (GlcNAc...) asparagine" evidence="3">
    <location>
        <position position="57"/>
    </location>
</feature>
<feature type="glycosylation site" description="N-linked (GlcNAc...) asparagine" evidence="3">
    <location>
        <position position="85"/>
    </location>
</feature>
<feature type="disulfide bond" evidence="1">
    <location>
        <begin position="54"/>
        <end position="58"/>
    </location>
</feature>
<feature type="disulfide bond" evidence="1">
    <location>
        <begin position="73"/>
        <end position="165"/>
    </location>
</feature>
<keyword id="KW-1015">Disulfide bond</keyword>
<keyword id="KW-0325">Glycoprotein</keyword>
<keyword id="KW-0873">Pyrrolidone carboxylic acid</keyword>
<keyword id="KW-1185">Reference proteome</keyword>
<keyword id="KW-0964">Secreted</keyword>
<keyword id="KW-0732">Signal</keyword>
<accession>Q9Z1I7</accession>
<protein>
    <recommendedName>
        <fullName>Aphrodisin</fullName>
    </recommendedName>
</protein>
<comment type="function">
    <text>Acts as an aphrodisiac pheromone, reliably eliciting copulatory behavior from male hamster.</text>
</comment>
<comment type="subcellular location">
    <subcellularLocation>
        <location>Secreted</location>
    </subcellularLocation>
</comment>
<comment type="tissue specificity">
    <text>Expressed in the vagina, uterus, and Bartholin's glands of female hamsters. Secreted in vaginal discharge.</text>
</comment>
<comment type="similarity">
    <text evidence="4">Belongs to the calycin superfamily. Lipocalin family.</text>
</comment>
<proteinExistence type="evidence at transcript level"/>
<reference key="1">
    <citation type="journal article" date="1999" name="J. Biol. Chem.">
        <title>The golden hamster aphrodisin gene: structure, expression in parotid glands of female animals, and comparison to a similar murine gene.</title>
        <authorList>
            <person name="Maegert H.-J."/>
            <person name="Cieslak A."/>
            <person name="Alkan O."/>
            <person name="Luscher B."/>
            <person name="Kauffels W."/>
            <person name="Forssmann W.-G."/>
        </authorList>
    </citation>
    <scope>NUCLEOTIDE SEQUENCE [GENOMIC DNA]</scope>
    <source>
        <tissue>Liver</tissue>
    </source>
</reference>
<name>APHR_MESAU</name>